<keyword id="KW-0687">Ribonucleoprotein</keyword>
<keyword id="KW-0689">Ribosomal protein</keyword>
<proteinExistence type="inferred from homology"/>
<reference key="1">
    <citation type="journal article" date="2004" name="Nucleic Acids Res.">
        <title>Whole genome comparisons of serotype 4b and 1/2a strains of the food-borne pathogen Listeria monocytogenes reveal new insights into the core genome components of this species.</title>
        <authorList>
            <person name="Nelson K.E."/>
            <person name="Fouts D.E."/>
            <person name="Mongodin E.F."/>
            <person name="Ravel J."/>
            <person name="DeBoy R.T."/>
            <person name="Kolonay J.F."/>
            <person name="Rasko D.A."/>
            <person name="Angiuoli S.V."/>
            <person name="Gill S.R."/>
            <person name="Paulsen I.T."/>
            <person name="Peterson J.D."/>
            <person name="White O."/>
            <person name="Nelson W.C."/>
            <person name="Nierman W.C."/>
            <person name="Beanan M.J."/>
            <person name="Brinkac L.M."/>
            <person name="Daugherty S.C."/>
            <person name="Dodson R.J."/>
            <person name="Durkin A.S."/>
            <person name="Madupu R."/>
            <person name="Haft D.H."/>
            <person name="Selengut J."/>
            <person name="Van Aken S.E."/>
            <person name="Khouri H.M."/>
            <person name="Fedorova N."/>
            <person name="Forberger H.A."/>
            <person name="Tran B."/>
            <person name="Kathariou S."/>
            <person name="Wonderling L.D."/>
            <person name="Uhlich G.A."/>
            <person name="Bayles D.O."/>
            <person name="Luchansky J.B."/>
            <person name="Fraser C.M."/>
        </authorList>
    </citation>
    <scope>NUCLEOTIDE SEQUENCE [LARGE SCALE GENOMIC DNA]</scope>
    <source>
        <strain>F2365</strain>
    </source>
</reference>
<comment type="similarity">
    <text evidence="1">Belongs to the bacterial ribosomal protein bL34 family.</text>
</comment>
<gene>
    <name evidence="1" type="primary">rpmH</name>
    <name type="ordered locus">LMOf2365_2846</name>
</gene>
<protein>
    <recommendedName>
        <fullName evidence="1">Large ribosomal subunit protein bL34</fullName>
    </recommendedName>
    <alternativeName>
        <fullName evidence="3">50S ribosomal protein L34</fullName>
    </alternativeName>
</protein>
<sequence length="44" mass="5299">MKRTYQPSKRKRKKVHGFRTRMSTKNGRRVLASRRRKGRKVLSA</sequence>
<evidence type="ECO:0000255" key="1">
    <source>
        <dbReference type="HAMAP-Rule" id="MF_00391"/>
    </source>
</evidence>
<evidence type="ECO:0000256" key="2">
    <source>
        <dbReference type="SAM" id="MobiDB-lite"/>
    </source>
</evidence>
<evidence type="ECO:0000305" key="3"/>
<dbReference type="EMBL" id="AE017262">
    <property type="protein sequence ID" value="AAT05610.1"/>
    <property type="molecule type" value="Genomic_DNA"/>
</dbReference>
<dbReference type="RefSeq" id="WP_003718062.1">
    <property type="nucleotide sequence ID" value="NC_002973.6"/>
</dbReference>
<dbReference type="SMR" id="Q71VQ6"/>
<dbReference type="GeneID" id="93240767"/>
<dbReference type="KEGG" id="lmf:LMOf2365_2846"/>
<dbReference type="HOGENOM" id="CLU_129938_2_0_9"/>
<dbReference type="GO" id="GO:1990904">
    <property type="term" value="C:ribonucleoprotein complex"/>
    <property type="evidence" value="ECO:0007669"/>
    <property type="project" value="UniProtKB-KW"/>
</dbReference>
<dbReference type="GO" id="GO:0005840">
    <property type="term" value="C:ribosome"/>
    <property type="evidence" value="ECO:0007669"/>
    <property type="project" value="UniProtKB-KW"/>
</dbReference>
<dbReference type="GO" id="GO:0003735">
    <property type="term" value="F:structural constituent of ribosome"/>
    <property type="evidence" value="ECO:0007669"/>
    <property type="project" value="InterPro"/>
</dbReference>
<dbReference type="GO" id="GO:0006412">
    <property type="term" value="P:translation"/>
    <property type="evidence" value="ECO:0007669"/>
    <property type="project" value="UniProtKB-UniRule"/>
</dbReference>
<dbReference type="FunFam" id="1.10.287.3980:FF:000001">
    <property type="entry name" value="Mitochondrial ribosomal protein L34"/>
    <property type="match status" value="1"/>
</dbReference>
<dbReference type="Gene3D" id="1.10.287.3980">
    <property type="match status" value="1"/>
</dbReference>
<dbReference type="HAMAP" id="MF_00391">
    <property type="entry name" value="Ribosomal_bL34"/>
    <property type="match status" value="1"/>
</dbReference>
<dbReference type="InterPro" id="IPR000271">
    <property type="entry name" value="Ribosomal_bL34"/>
</dbReference>
<dbReference type="InterPro" id="IPR020939">
    <property type="entry name" value="Ribosomal_bL34_CS"/>
</dbReference>
<dbReference type="NCBIfam" id="TIGR01030">
    <property type="entry name" value="rpmH_bact"/>
    <property type="match status" value="1"/>
</dbReference>
<dbReference type="PANTHER" id="PTHR14503:SF4">
    <property type="entry name" value="LARGE RIBOSOMAL SUBUNIT PROTEIN BL34M"/>
    <property type="match status" value="1"/>
</dbReference>
<dbReference type="PANTHER" id="PTHR14503">
    <property type="entry name" value="MITOCHONDRIAL RIBOSOMAL PROTEIN 34 FAMILY MEMBER"/>
    <property type="match status" value="1"/>
</dbReference>
<dbReference type="Pfam" id="PF00468">
    <property type="entry name" value="Ribosomal_L34"/>
    <property type="match status" value="1"/>
</dbReference>
<dbReference type="PROSITE" id="PS00784">
    <property type="entry name" value="RIBOSOMAL_L34"/>
    <property type="match status" value="1"/>
</dbReference>
<feature type="chain" id="PRO_0000187404" description="Large ribosomal subunit protein bL34">
    <location>
        <begin position="1"/>
        <end position="44"/>
    </location>
</feature>
<feature type="region of interest" description="Disordered" evidence="2">
    <location>
        <begin position="1"/>
        <end position="44"/>
    </location>
</feature>
<feature type="compositionally biased region" description="Basic residues" evidence="2">
    <location>
        <begin position="1"/>
        <end position="19"/>
    </location>
</feature>
<feature type="compositionally biased region" description="Basic residues" evidence="2">
    <location>
        <begin position="26"/>
        <end position="44"/>
    </location>
</feature>
<accession>Q71VQ6</accession>
<name>RL34_LISMF</name>
<organism>
    <name type="scientific">Listeria monocytogenes serotype 4b (strain F2365)</name>
    <dbReference type="NCBI Taxonomy" id="265669"/>
    <lineage>
        <taxon>Bacteria</taxon>
        <taxon>Bacillati</taxon>
        <taxon>Bacillota</taxon>
        <taxon>Bacilli</taxon>
        <taxon>Bacillales</taxon>
        <taxon>Listeriaceae</taxon>
        <taxon>Listeria</taxon>
    </lineage>
</organism>